<protein>
    <recommendedName>
        <fullName evidence="1">Protein RecA</fullName>
    </recommendedName>
    <alternativeName>
        <fullName evidence="1">Recombinase A</fullName>
    </alternativeName>
</protein>
<organism>
    <name type="scientific">Legionella pneumophila (strain Paris)</name>
    <dbReference type="NCBI Taxonomy" id="297246"/>
    <lineage>
        <taxon>Bacteria</taxon>
        <taxon>Pseudomonadati</taxon>
        <taxon>Pseudomonadota</taxon>
        <taxon>Gammaproteobacteria</taxon>
        <taxon>Legionellales</taxon>
        <taxon>Legionellaceae</taxon>
        <taxon>Legionella</taxon>
    </lineage>
</organism>
<reference key="1">
    <citation type="journal article" date="2004" name="Nat. Genet.">
        <title>Evidence in the Legionella pneumophila genome for exploitation of host cell functions and high genome plasticity.</title>
        <authorList>
            <person name="Cazalet C."/>
            <person name="Rusniok C."/>
            <person name="Brueggemann H."/>
            <person name="Zidane N."/>
            <person name="Magnier A."/>
            <person name="Ma L."/>
            <person name="Tichit M."/>
            <person name="Jarraud S."/>
            <person name="Bouchier C."/>
            <person name="Vandenesch F."/>
            <person name="Kunst F."/>
            <person name="Etienne J."/>
            <person name="Glaser P."/>
            <person name="Buchrieser C."/>
        </authorList>
    </citation>
    <scope>NUCLEOTIDE SEQUENCE [LARGE SCALE GENOMIC DNA]</scope>
    <source>
        <strain>Paris</strain>
    </source>
</reference>
<feature type="chain" id="PRO_0000122737" description="Protein RecA">
    <location>
        <begin position="1"/>
        <end position="348"/>
    </location>
</feature>
<feature type="binding site" evidence="1">
    <location>
        <begin position="66"/>
        <end position="73"/>
    </location>
    <ligand>
        <name>ATP</name>
        <dbReference type="ChEBI" id="CHEBI:30616"/>
    </ligand>
</feature>
<name>RECA_LEGPA</name>
<evidence type="ECO:0000255" key="1">
    <source>
        <dbReference type="HAMAP-Rule" id="MF_00268"/>
    </source>
</evidence>
<gene>
    <name evidence="1" type="primary">recA</name>
    <name type="ordered locus">lpp1765</name>
</gene>
<dbReference type="EMBL" id="CR628336">
    <property type="protein sequence ID" value="CAH12917.1"/>
    <property type="molecule type" value="Genomic_DNA"/>
</dbReference>
<dbReference type="RefSeq" id="WP_010947527.1">
    <property type="nucleotide sequence ID" value="NC_006368.1"/>
</dbReference>
<dbReference type="SMR" id="Q5X4B5"/>
<dbReference type="GeneID" id="57035793"/>
<dbReference type="KEGG" id="lpp:lpp1765"/>
<dbReference type="LegioList" id="lpp1765"/>
<dbReference type="HOGENOM" id="CLU_040469_3_2_6"/>
<dbReference type="GO" id="GO:0005829">
    <property type="term" value="C:cytosol"/>
    <property type="evidence" value="ECO:0007669"/>
    <property type="project" value="TreeGrafter"/>
</dbReference>
<dbReference type="GO" id="GO:0005524">
    <property type="term" value="F:ATP binding"/>
    <property type="evidence" value="ECO:0007669"/>
    <property type="project" value="UniProtKB-UniRule"/>
</dbReference>
<dbReference type="GO" id="GO:0016887">
    <property type="term" value="F:ATP hydrolysis activity"/>
    <property type="evidence" value="ECO:0007669"/>
    <property type="project" value="InterPro"/>
</dbReference>
<dbReference type="GO" id="GO:0140664">
    <property type="term" value="F:ATP-dependent DNA damage sensor activity"/>
    <property type="evidence" value="ECO:0007669"/>
    <property type="project" value="InterPro"/>
</dbReference>
<dbReference type="GO" id="GO:0003684">
    <property type="term" value="F:damaged DNA binding"/>
    <property type="evidence" value="ECO:0007669"/>
    <property type="project" value="UniProtKB-UniRule"/>
</dbReference>
<dbReference type="GO" id="GO:0003697">
    <property type="term" value="F:single-stranded DNA binding"/>
    <property type="evidence" value="ECO:0007669"/>
    <property type="project" value="UniProtKB-UniRule"/>
</dbReference>
<dbReference type="GO" id="GO:0006310">
    <property type="term" value="P:DNA recombination"/>
    <property type="evidence" value="ECO:0007669"/>
    <property type="project" value="UniProtKB-UniRule"/>
</dbReference>
<dbReference type="GO" id="GO:0006281">
    <property type="term" value="P:DNA repair"/>
    <property type="evidence" value="ECO:0007669"/>
    <property type="project" value="UniProtKB-UniRule"/>
</dbReference>
<dbReference type="GO" id="GO:0009432">
    <property type="term" value="P:SOS response"/>
    <property type="evidence" value="ECO:0007669"/>
    <property type="project" value="UniProtKB-UniRule"/>
</dbReference>
<dbReference type="CDD" id="cd00983">
    <property type="entry name" value="RecA"/>
    <property type="match status" value="1"/>
</dbReference>
<dbReference type="FunFam" id="3.40.50.300:FF:000087">
    <property type="entry name" value="Recombinase RecA"/>
    <property type="match status" value="1"/>
</dbReference>
<dbReference type="Gene3D" id="3.40.50.300">
    <property type="entry name" value="P-loop containing nucleotide triphosphate hydrolases"/>
    <property type="match status" value="1"/>
</dbReference>
<dbReference type="HAMAP" id="MF_00268">
    <property type="entry name" value="RecA"/>
    <property type="match status" value="1"/>
</dbReference>
<dbReference type="InterPro" id="IPR003593">
    <property type="entry name" value="AAA+_ATPase"/>
</dbReference>
<dbReference type="InterPro" id="IPR013765">
    <property type="entry name" value="DNA_recomb/repair_RecA"/>
</dbReference>
<dbReference type="InterPro" id="IPR020584">
    <property type="entry name" value="DNA_recomb/repair_RecA_CS"/>
</dbReference>
<dbReference type="InterPro" id="IPR027417">
    <property type="entry name" value="P-loop_NTPase"/>
</dbReference>
<dbReference type="InterPro" id="IPR049261">
    <property type="entry name" value="RecA-like_C"/>
</dbReference>
<dbReference type="InterPro" id="IPR049428">
    <property type="entry name" value="RecA-like_N"/>
</dbReference>
<dbReference type="InterPro" id="IPR020588">
    <property type="entry name" value="RecA_ATP-bd"/>
</dbReference>
<dbReference type="InterPro" id="IPR023400">
    <property type="entry name" value="RecA_C_sf"/>
</dbReference>
<dbReference type="InterPro" id="IPR020587">
    <property type="entry name" value="RecA_monomer-monomer_interface"/>
</dbReference>
<dbReference type="NCBIfam" id="TIGR02012">
    <property type="entry name" value="tigrfam_recA"/>
    <property type="match status" value="1"/>
</dbReference>
<dbReference type="PANTHER" id="PTHR45900:SF1">
    <property type="entry name" value="MITOCHONDRIAL DNA REPAIR PROTEIN RECA HOMOLOG-RELATED"/>
    <property type="match status" value="1"/>
</dbReference>
<dbReference type="PANTHER" id="PTHR45900">
    <property type="entry name" value="RECA"/>
    <property type="match status" value="1"/>
</dbReference>
<dbReference type="Pfam" id="PF00154">
    <property type="entry name" value="RecA"/>
    <property type="match status" value="1"/>
</dbReference>
<dbReference type="Pfam" id="PF21096">
    <property type="entry name" value="RecA_C"/>
    <property type="match status" value="1"/>
</dbReference>
<dbReference type="PRINTS" id="PR00142">
    <property type="entry name" value="RECA"/>
</dbReference>
<dbReference type="SMART" id="SM00382">
    <property type="entry name" value="AAA"/>
    <property type="match status" value="1"/>
</dbReference>
<dbReference type="SUPFAM" id="SSF52540">
    <property type="entry name" value="P-loop containing nucleoside triphosphate hydrolases"/>
    <property type="match status" value="1"/>
</dbReference>
<dbReference type="SUPFAM" id="SSF54752">
    <property type="entry name" value="RecA protein, C-terminal domain"/>
    <property type="match status" value="1"/>
</dbReference>
<dbReference type="PROSITE" id="PS00321">
    <property type="entry name" value="RECA_1"/>
    <property type="match status" value="1"/>
</dbReference>
<dbReference type="PROSITE" id="PS50162">
    <property type="entry name" value="RECA_2"/>
    <property type="match status" value="1"/>
</dbReference>
<dbReference type="PROSITE" id="PS50163">
    <property type="entry name" value="RECA_3"/>
    <property type="match status" value="1"/>
</dbReference>
<comment type="function">
    <text evidence="1">Can catalyze the hydrolysis of ATP in the presence of single-stranded DNA, the ATP-dependent uptake of single-stranded DNA by duplex DNA, and the ATP-dependent hybridization of homologous single-stranded DNAs. It interacts with LexA causing its activation and leading to its autocatalytic cleavage.</text>
</comment>
<comment type="subcellular location">
    <subcellularLocation>
        <location evidence="1">Cytoplasm</location>
    </subcellularLocation>
</comment>
<comment type="similarity">
    <text evidence="1">Belongs to the RecA family.</text>
</comment>
<proteinExistence type="inferred from homology"/>
<sequence length="348" mass="37949">MEENKQKALSAALSQIERQFGKGSVMRMGDSTVSRDIEAISTGSLGLDIALGIGGLPKGRIVEIYGPESSGKTTLTLQVIAECQKMGGTAAFIDAEHALDPSYAQKLGVKVDELLVSQPDTGEQALEITDMLVRSAAVDVVIIDSVAALTPKAEIEGEMGDSHVGLQARLMSQALRKLTANIKRSNTLVIFINQIRMKIGVMFGSPETTTGGNALKFYASVRLDIRRIGSIKKGEEILGSETRVKVVKNKVAPPFKMTEFDILYNEGISRESEIINLGVQLNLIEKSGAWYSYKQEKIGQGKENVRLYLKENPQVAAELEQQIRTELLEKKLSVLASSSEDLFETIDD</sequence>
<keyword id="KW-0067">ATP-binding</keyword>
<keyword id="KW-0963">Cytoplasm</keyword>
<keyword id="KW-0227">DNA damage</keyword>
<keyword id="KW-0233">DNA recombination</keyword>
<keyword id="KW-0234">DNA repair</keyword>
<keyword id="KW-0238">DNA-binding</keyword>
<keyword id="KW-0547">Nucleotide-binding</keyword>
<keyword id="KW-0742">SOS response</keyword>
<accession>Q5X4B5</accession>